<keyword id="KW-0963">Cytoplasm</keyword>
<keyword id="KW-0903">Direct protein sequencing</keyword>
<keyword id="KW-0378">Hydrolase</keyword>
<keyword id="KW-0452">Lithium</keyword>
<keyword id="KW-0460">Magnesium</keyword>
<keyword id="KW-0479">Metal-binding</keyword>
<keyword id="KW-1185">Reference proteome</keyword>
<feature type="chain" id="PRO_0000142517" description="Inositol monophosphatase 1">
    <location>
        <begin position="1"/>
        <end position="277"/>
    </location>
</feature>
<feature type="binding site" evidence="1">
    <location>
        <position position="70"/>
    </location>
    <ligand>
        <name>Mg(2+)</name>
        <dbReference type="ChEBI" id="CHEBI:18420"/>
        <label>1</label>
        <note>catalytic</note>
    </ligand>
</feature>
<feature type="binding site" evidence="1">
    <location>
        <position position="70"/>
    </location>
    <ligand>
        <name>substrate</name>
    </ligand>
</feature>
<feature type="binding site" evidence="1">
    <location>
        <position position="90"/>
    </location>
    <ligand>
        <name>Mg(2+)</name>
        <dbReference type="ChEBI" id="CHEBI:18420"/>
        <label>1</label>
        <note>catalytic</note>
    </ligand>
</feature>
<feature type="binding site" evidence="1">
    <location>
        <position position="90"/>
    </location>
    <ligand>
        <name>Mg(2+)</name>
        <dbReference type="ChEBI" id="CHEBI:18420"/>
        <label>2</label>
    </ligand>
</feature>
<feature type="binding site" evidence="1">
    <location>
        <begin position="92"/>
        <end position="95"/>
    </location>
    <ligand>
        <name>substrate</name>
    </ligand>
</feature>
<feature type="binding site" evidence="1">
    <location>
        <position position="92"/>
    </location>
    <ligand>
        <name>Mg(2+)</name>
        <dbReference type="ChEBI" id="CHEBI:18420"/>
        <label>1</label>
        <note>catalytic</note>
    </ligand>
</feature>
<feature type="binding site" evidence="1">
    <location>
        <position position="93"/>
    </location>
    <ligand>
        <name>Mg(2+)</name>
        <dbReference type="ChEBI" id="CHEBI:18420"/>
        <label>2</label>
    </ligand>
</feature>
<feature type="binding site" evidence="1">
    <location>
        <begin position="194"/>
        <end position="196"/>
    </location>
    <ligand>
        <name>substrate</name>
    </ligand>
</feature>
<feature type="binding site" evidence="1">
    <location>
        <position position="213"/>
    </location>
    <ligand>
        <name>substrate</name>
    </ligand>
</feature>
<feature type="binding site" evidence="1">
    <location>
        <position position="220"/>
    </location>
    <ligand>
        <name>Mg(2+)</name>
        <dbReference type="ChEBI" id="CHEBI:18420"/>
        <label>2</label>
    </ligand>
</feature>
<feature type="binding site" evidence="1">
    <location>
        <position position="220"/>
    </location>
    <ligand>
        <name>substrate</name>
    </ligand>
</feature>
<protein>
    <recommendedName>
        <fullName>Inositol monophosphatase 1</fullName>
        <shortName>IMP 1</shortName>
        <shortName>IMPase 1</shortName>
        <ecNumber evidence="3">3.1.3.25</ecNumber>
    </recommendedName>
    <alternativeName>
        <fullName evidence="4">D-galactose 1-phosphate phosphatase</fullName>
        <ecNumber evidence="3">3.1.3.94</ecNumber>
    </alternativeName>
    <alternativeName>
        <fullName>Inositol-1(or 4)-monophosphatase 1</fullName>
    </alternativeName>
    <alternativeName>
        <fullName>Lithium-sensitive myo-inositol monophosphatase A1</fullName>
    </alternativeName>
</protein>
<proteinExistence type="evidence at protein level"/>
<name>IMPA1_RAT</name>
<evidence type="ECO:0000250" key="1">
    <source>
        <dbReference type="UniProtKB" id="P29218"/>
    </source>
</evidence>
<evidence type="ECO:0000269" key="2">
    <source>
    </source>
</evidence>
<evidence type="ECO:0000269" key="3">
    <source>
    </source>
</evidence>
<evidence type="ECO:0000303" key="4">
    <source>
    </source>
</evidence>
<evidence type="ECO:0000305" key="5"/>
<evidence type="ECO:0000305" key="6">
    <source>
    </source>
</evidence>
<accession>P97697</accession>
<reference key="1">
    <citation type="journal article" date="1997" name="Gene">
        <title>Molecular characterization of coding and untranslated regions of rat cortex lithium-sensitive myo-inositol monophosphatase cDNA.</title>
        <authorList>
            <person name="Parthasarathy L."/>
            <person name="Parthasarathy R."/>
            <person name="Vadnal R."/>
        </authorList>
    </citation>
    <scope>NUCLEOTIDE SEQUENCE [MRNA]</scope>
    <source>
        <strain>Sprague-Dawley</strain>
        <tissue>Brain</tissue>
    </source>
</reference>
<reference key="2">
    <citation type="submission" date="1999-10" db="EMBL/GenBank/DDBJ databases">
        <authorList>
            <person name="Parthasarathy L."/>
            <person name="Parthasarathy R."/>
            <person name="Vadnal R."/>
        </authorList>
    </citation>
    <scope>SEQUENCE REVISION</scope>
</reference>
<reference key="3">
    <citation type="submission" date="2007-07" db="UniProtKB">
        <authorList>
            <person name="Lubec G."/>
            <person name="Kang S.U."/>
        </authorList>
    </citation>
    <scope>PROTEIN SEQUENCE OF 157-167</scope>
    <scope>IDENTIFICATION BY MASS SPECTROMETRY</scope>
    <source>
        <strain>Sprague-Dawley</strain>
        <tissue>Brain</tissue>
    </source>
</reference>
<reference key="4">
    <citation type="journal article" date="1992" name="Biochem. J.">
        <title>cDNA cloning of human and rat brain myo-inositol monophosphatase. Expression and characterization of the human recombinant enzyme.</title>
        <authorList>
            <person name="McAllister G."/>
            <person name="Whiting P."/>
            <person name="Hammond E.A."/>
            <person name="Knowles M.R."/>
            <person name="Atack J.R."/>
            <person name="Bailey F.J."/>
            <person name="Maigetter R."/>
            <person name="Ragan C.I."/>
        </authorList>
    </citation>
    <scope>TISSUE SPECIFICITY</scope>
</reference>
<reference key="5">
    <citation type="journal article" date="1997" name="Brain Res.">
        <title>Brain inositol monophosphatase identified as a galactose 1-phosphatase.</title>
        <authorList>
            <person name="Parthasarathy R."/>
            <person name="Parthasarathy L."/>
            <person name="Vadnal R."/>
        </authorList>
    </citation>
    <scope>FUNCTION</scope>
    <scope>CATALYTIC ACTIVITY</scope>
    <scope>COFACTOR</scope>
    <scope>ACTIVITY REGULATION</scope>
    <scope>SUBUNIT</scope>
</reference>
<reference key="6">
    <citation type="journal article" date="2012" name="Nat. Commun.">
        <title>Quantitative maps of protein phosphorylation sites across 14 different rat organs and tissues.</title>
        <authorList>
            <person name="Lundby A."/>
            <person name="Secher A."/>
            <person name="Lage K."/>
            <person name="Nordsborg N.B."/>
            <person name="Dmytriyev A."/>
            <person name="Lundby C."/>
            <person name="Olsen J.V."/>
        </authorList>
    </citation>
    <scope>IDENTIFICATION BY MASS SPECTROMETRY [LARGE SCALE ANALYSIS]</scope>
</reference>
<sequence length="277" mass="30511">MADPWQECMDYAVILARQAGEMIREALKNKMDVMIKSSPADLVTVTDQKVEKMLMSSIKEKYPYHSFIGEESVASGEKTVFTEQPTWIIDPIDGTTNFVHRFPFVAVSIGFVVNKEMEFGVVYSCVEDKMYTGRKGKGAFCNGQKLRVSQQEDITKSLLVTELGSSRKPETLRIVLSNMERLCSIPIHGIRSVGTAAVNMCLVATGGADAYYEMGIHCWDMAGAGIIVIEAGGVLLDVTGGPFDLMSRRIIAASNIALAERIAKELEIIPLQRDDES</sequence>
<dbReference type="EC" id="3.1.3.25" evidence="3"/>
<dbReference type="EC" id="3.1.3.94" evidence="3"/>
<dbReference type="EMBL" id="U84038">
    <property type="protein sequence ID" value="AAB63338.2"/>
    <property type="molecule type" value="mRNA"/>
</dbReference>
<dbReference type="RefSeq" id="NP_114446.1">
    <property type="nucleotide sequence ID" value="NM_032057.1"/>
</dbReference>
<dbReference type="SMR" id="P97697"/>
<dbReference type="BioGRID" id="249742">
    <property type="interactions" value="1"/>
</dbReference>
<dbReference type="FunCoup" id="P97697">
    <property type="interactions" value="1632"/>
</dbReference>
<dbReference type="MINT" id="P97697"/>
<dbReference type="STRING" id="10116.ENSRNOP00000014274"/>
<dbReference type="ChEMBL" id="CHEMBL1293238"/>
<dbReference type="iPTMnet" id="P97697"/>
<dbReference type="PhosphoSitePlus" id="P97697"/>
<dbReference type="SwissPalm" id="P97697"/>
<dbReference type="jPOST" id="P97697"/>
<dbReference type="PaxDb" id="10116-ENSRNOP00000014274"/>
<dbReference type="GeneID" id="83523"/>
<dbReference type="KEGG" id="rno:83523"/>
<dbReference type="UCSC" id="RGD:69254">
    <property type="organism name" value="rat"/>
</dbReference>
<dbReference type="AGR" id="RGD:69254"/>
<dbReference type="CTD" id="3612"/>
<dbReference type="RGD" id="69254">
    <property type="gene designation" value="Impa1"/>
</dbReference>
<dbReference type="eggNOG" id="KOG2951">
    <property type="taxonomic scope" value="Eukaryota"/>
</dbReference>
<dbReference type="InParanoid" id="P97697"/>
<dbReference type="PhylomeDB" id="P97697"/>
<dbReference type="BRENDA" id="3.1.3.25">
    <property type="organism ID" value="5301"/>
</dbReference>
<dbReference type="Reactome" id="R-RNO-1855183">
    <property type="pathway name" value="Synthesis of IP2, IP, and Ins in the cytosol"/>
</dbReference>
<dbReference type="SABIO-RK" id="P97697"/>
<dbReference type="UniPathway" id="UPA00823">
    <property type="reaction ID" value="UER00788"/>
</dbReference>
<dbReference type="PRO" id="PR:P97697"/>
<dbReference type="Proteomes" id="UP000002494">
    <property type="component" value="Unplaced"/>
</dbReference>
<dbReference type="GO" id="GO:0030424">
    <property type="term" value="C:axon"/>
    <property type="evidence" value="ECO:0000314"/>
    <property type="project" value="BHF-UCL"/>
</dbReference>
<dbReference type="GO" id="GO:0005737">
    <property type="term" value="C:cytoplasm"/>
    <property type="evidence" value="ECO:0000266"/>
    <property type="project" value="RGD"/>
</dbReference>
<dbReference type="GO" id="GO:0043025">
    <property type="term" value="C:neuronal cell body"/>
    <property type="evidence" value="ECO:0000314"/>
    <property type="project" value="BHF-UCL"/>
</dbReference>
<dbReference type="GO" id="GO:0103026">
    <property type="term" value="F:fructose-1-phosphatase activity"/>
    <property type="evidence" value="ECO:0007669"/>
    <property type="project" value="RHEA"/>
</dbReference>
<dbReference type="GO" id="GO:0008877">
    <property type="term" value="F:glucose-1-phosphatase activity"/>
    <property type="evidence" value="ECO:0007669"/>
    <property type="project" value="RHEA"/>
</dbReference>
<dbReference type="GO" id="GO:0004346">
    <property type="term" value="F:glucose-6-phosphatase activity"/>
    <property type="evidence" value="ECO:0007669"/>
    <property type="project" value="RHEA"/>
</dbReference>
<dbReference type="GO" id="GO:0047954">
    <property type="term" value="F:glycerol-2-phosphatase activity"/>
    <property type="evidence" value="ECO:0007669"/>
    <property type="project" value="RHEA"/>
</dbReference>
<dbReference type="GO" id="GO:0042802">
    <property type="term" value="F:identical protein binding"/>
    <property type="evidence" value="ECO:0000266"/>
    <property type="project" value="RGD"/>
</dbReference>
<dbReference type="GO" id="GO:0008934">
    <property type="term" value="F:inositol monophosphate 1-phosphatase activity"/>
    <property type="evidence" value="ECO:0000314"/>
    <property type="project" value="RGD"/>
</dbReference>
<dbReference type="GO" id="GO:0052832">
    <property type="term" value="F:inositol monophosphate 3-phosphatase activity"/>
    <property type="evidence" value="ECO:0007669"/>
    <property type="project" value="RHEA"/>
</dbReference>
<dbReference type="GO" id="GO:0052833">
    <property type="term" value="F:inositol monophosphate 4-phosphatase activity"/>
    <property type="evidence" value="ECO:0007669"/>
    <property type="project" value="RHEA"/>
</dbReference>
<dbReference type="GO" id="GO:0052834">
    <property type="term" value="F:inositol monophosphate phosphatase activity"/>
    <property type="evidence" value="ECO:0000314"/>
    <property type="project" value="UniProtKB"/>
</dbReference>
<dbReference type="GO" id="GO:0031403">
    <property type="term" value="F:lithium ion binding"/>
    <property type="evidence" value="ECO:0000314"/>
    <property type="project" value="UniProtKB"/>
</dbReference>
<dbReference type="GO" id="GO:0000287">
    <property type="term" value="F:magnesium ion binding"/>
    <property type="evidence" value="ECO:0000314"/>
    <property type="project" value="UniProtKB"/>
</dbReference>
<dbReference type="GO" id="GO:0030145">
    <property type="term" value="F:manganese ion binding"/>
    <property type="evidence" value="ECO:0000314"/>
    <property type="project" value="UniProtKB"/>
</dbReference>
<dbReference type="GO" id="GO:0042803">
    <property type="term" value="F:protein homodimerization activity"/>
    <property type="evidence" value="ECO:0000266"/>
    <property type="project" value="RGD"/>
</dbReference>
<dbReference type="GO" id="GO:0006021">
    <property type="term" value="P:inositol biosynthetic process"/>
    <property type="evidence" value="ECO:0007669"/>
    <property type="project" value="UniProtKB-UniPathway"/>
</dbReference>
<dbReference type="GO" id="GO:0006020">
    <property type="term" value="P:inositol metabolic process"/>
    <property type="evidence" value="ECO:0000318"/>
    <property type="project" value="GO_Central"/>
</dbReference>
<dbReference type="GO" id="GO:0006796">
    <property type="term" value="P:phosphate-containing compound metabolic process"/>
    <property type="evidence" value="ECO:0000266"/>
    <property type="project" value="RGD"/>
</dbReference>
<dbReference type="GO" id="GO:0006661">
    <property type="term" value="P:phosphatidylinositol biosynthetic process"/>
    <property type="evidence" value="ECO:0000315"/>
    <property type="project" value="RGD"/>
</dbReference>
<dbReference type="GO" id="GO:0046854">
    <property type="term" value="P:phosphatidylinositol phosphate biosynthetic process"/>
    <property type="evidence" value="ECO:0007669"/>
    <property type="project" value="InterPro"/>
</dbReference>
<dbReference type="GO" id="GO:0007165">
    <property type="term" value="P:signal transduction"/>
    <property type="evidence" value="ECO:0000266"/>
    <property type="project" value="RGD"/>
</dbReference>
<dbReference type="CDD" id="cd01639">
    <property type="entry name" value="IMPase"/>
    <property type="match status" value="1"/>
</dbReference>
<dbReference type="FunFam" id="3.30.540.10:FF:000004">
    <property type="entry name" value="Inositol-1-monophosphatase"/>
    <property type="match status" value="1"/>
</dbReference>
<dbReference type="FunFam" id="3.40.190.80:FF:000002">
    <property type="entry name" value="Inositol-1-monophosphatase"/>
    <property type="match status" value="1"/>
</dbReference>
<dbReference type="Gene3D" id="3.40.190.80">
    <property type="match status" value="1"/>
</dbReference>
<dbReference type="Gene3D" id="3.30.540.10">
    <property type="entry name" value="Fructose-1,6-Bisphosphatase, subunit A, domain 1"/>
    <property type="match status" value="1"/>
</dbReference>
<dbReference type="InterPro" id="IPR033942">
    <property type="entry name" value="IMPase"/>
</dbReference>
<dbReference type="InterPro" id="IPR020583">
    <property type="entry name" value="Inositol_monoP_metal-BS"/>
</dbReference>
<dbReference type="InterPro" id="IPR020552">
    <property type="entry name" value="Inositol_monoPase_Li-sen"/>
</dbReference>
<dbReference type="InterPro" id="IPR000760">
    <property type="entry name" value="Inositol_monophosphatase-like"/>
</dbReference>
<dbReference type="InterPro" id="IPR020550">
    <property type="entry name" value="Inositol_monophosphatase_CS"/>
</dbReference>
<dbReference type="PANTHER" id="PTHR20854">
    <property type="entry name" value="INOSITOL MONOPHOSPHATASE"/>
    <property type="match status" value="1"/>
</dbReference>
<dbReference type="PANTHER" id="PTHR20854:SF26">
    <property type="entry name" value="INOSITOL MONOPHOSPHATASE 1"/>
    <property type="match status" value="1"/>
</dbReference>
<dbReference type="Pfam" id="PF00459">
    <property type="entry name" value="Inositol_P"/>
    <property type="match status" value="1"/>
</dbReference>
<dbReference type="PRINTS" id="PR00377">
    <property type="entry name" value="IMPHPHTASES"/>
</dbReference>
<dbReference type="PRINTS" id="PR00378">
    <property type="entry name" value="LIIMPHPHTASE"/>
</dbReference>
<dbReference type="SUPFAM" id="SSF56655">
    <property type="entry name" value="Carbohydrate phosphatase"/>
    <property type="match status" value="1"/>
</dbReference>
<dbReference type="PROSITE" id="PS00629">
    <property type="entry name" value="IMP_1"/>
    <property type="match status" value="1"/>
</dbReference>
<dbReference type="PROSITE" id="PS00630">
    <property type="entry name" value="IMP_2"/>
    <property type="match status" value="1"/>
</dbReference>
<comment type="function">
    <text evidence="1 3">Phosphatase involved in the dephosphorylation of myo-inositol monophosphate to generate myo-inositol (PubMed:9462881). Is also able to dephosphorylate scyllo-inositol-phosphate, myo-inositol 1,4-diphosphate, scyllo-inositol-1,3-diphosphate and scyllo-inositol-1,4-diphosphate (By similarity). Also dephosphorylates in vitro other sugar-phosphates including D-galactose-1-phosphate, glucose-1-phosphate, glucose-6-phosphate, fructose-1-phosphate, beta-glycerophosphate and 2'-AMP (PubMed:9462881). Responsible for the provision of inositol required for synthesis of phosphatidylinositol and polyphosphoinositides, and involved in maintaining normal brain function. Has been implicated as the pharmacological target for lithium Li(+) action in brain (By similarity). Is equally active with myo-inositol monophosphate and D-galactose 1-phosphate (PubMed:9462881).</text>
</comment>
<comment type="catalytic activity">
    <reaction evidence="3">
        <text>a myo-inositol phosphate + H2O = myo-inositol + phosphate</text>
        <dbReference type="Rhea" id="RHEA:24056"/>
        <dbReference type="ChEBI" id="CHEBI:15377"/>
        <dbReference type="ChEBI" id="CHEBI:17268"/>
        <dbReference type="ChEBI" id="CHEBI:43474"/>
        <dbReference type="ChEBI" id="CHEBI:84139"/>
        <dbReference type="EC" id="3.1.3.25"/>
    </reaction>
    <physiologicalReaction direction="left-to-right" evidence="6">
        <dbReference type="Rhea" id="RHEA:24057"/>
    </physiologicalReaction>
</comment>
<comment type="catalytic activity">
    <reaction evidence="3">
        <text>1D-myo-inositol 1-phosphate + H2O = myo-inositol + phosphate</text>
        <dbReference type="Rhea" id="RHEA:27670"/>
        <dbReference type="ChEBI" id="CHEBI:15377"/>
        <dbReference type="ChEBI" id="CHEBI:17268"/>
        <dbReference type="ChEBI" id="CHEBI:43474"/>
        <dbReference type="ChEBI" id="CHEBI:58433"/>
        <dbReference type="EC" id="3.1.3.25"/>
    </reaction>
    <physiologicalReaction direction="left-to-right" evidence="6">
        <dbReference type="Rhea" id="RHEA:27671"/>
    </physiologicalReaction>
</comment>
<comment type="catalytic activity">
    <reaction evidence="1">
        <text>1D-myo-inositol 2-phosphate + H2O = myo-inositol + phosphate</text>
        <dbReference type="Rhea" id="RHEA:44152"/>
        <dbReference type="ChEBI" id="CHEBI:15377"/>
        <dbReference type="ChEBI" id="CHEBI:17268"/>
        <dbReference type="ChEBI" id="CHEBI:43474"/>
        <dbReference type="ChEBI" id="CHEBI:84142"/>
        <dbReference type="EC" id="3.1.3.25"/>
    </reaction>
    <physiologicalReaction direction="left-to-right" evidence="1">
        <dbReference type="Rhea" id="RHEA:44153"/>
    </physiologicalReaction>
</comment>
<comment type="catalytic activity">
    <reaction evidence="3">
        <text>1D-myo-inositol 3-phosphate + H2O = myo-inositol + phosphate</text>
        <dbReference type="Rhea" id="RHEA:30739"/>
        <dbReference type="ChEBI" id="CHEBI:15377"/>
        <dbReference type="ChEBI" id="CHEBI:17268"/>
        <dbReference type="ChEBI" id="CHEBI:43474"/>
        <dbReference type="ChEBI" id="CHEBI:58401"/>
        <dbReference type="EC" id="3.1.3.25"/>
    </reaction>
    <physiologicalReaction direction="left-to-right" evidence="6">
        <dbReference type="Rhea" id="RHEA:30740"/>
    </physiologicalReaction>
</comment>
<comment type="catalytic activity">
    <reaction evidence="1">
        <text>1D-myo-inositol 4-phosphate + H2O = myo-inositol + phosphate</text>
        <dbReference type="Rhea" id="RHEA:30735"/>
        <dbReference type="ChEBI" id="CHEBI:15377"/>
        <dbReference type="ChEBI" id="CHEBI:17268"/>
        <dbReference type="ChEBI" id="CHEBI:43474"/>
        <dbReference type="ChEBI" id="CHEBI:58469"/>
        <dbReference type="EC" id="3.1.3.25"/>
    </reaction>
    <physiologicalReaction direction="left-to-right" evidence="1">
        <dbReference type="Rhea" id="RHEA:30736"/>
    </physiologicalReaction>
</comment>
<comment type="catalytic activity">
    <reaction evidence="1">
        <text>1D-myo-inositol 5-phosphate + H2O = myo-inositol + phosphate</text>
        <dbReference type="Rhea" id="RHEA:44156"/>
        <dbReference type="ChEBI" id="CHEBI:15377"/>
        <dbReference type="ChEBI" id="CHEBI:17268"/>
        <dbReference type="ChEBI" id="CHEBI:43474"/>
        <dbReference type="ChEBI" id="CHEBI:84141"/>
        <dbReference type="EC" id="3.1.3.25"/>
    </reaction>
    <physiologicalReaction direction="left-to-right" evidence="1">
        <dbReference type="Rhea" id="RHEA:44157"/>
    </physiologicalReaction>
</comment>
<comment type="catalytic activity">
    <reaction evidence="1">
        <text>1D-myo-inositol 6-phosphate + H2O = myo-inositol + phosphate</text>
        <dbReference type="Rhea" id="RHEA:44160"/>
        <dbReference type="ChEBI" id="CHEBI:15377"/>
        <dbReference type="ChEBI" id="CHEBI:17268"/>
        <dbReference type="ChEBI" id="CHEBI:43474"/>
        <dbReference type="ChEBI" id="CHEBI:64841"/>
        <dbReference type="EC" id="3.1.3.25"/>
    </reaction>
    <physiologicalReaction direction="left-to-right" evidence="1">
        <dbReference type="Rhea" id="RHEA:44161"/>
    </physiologicalReaction>
</comment>
<comment type="catalytic activity">
    <reaction evidence="1">
        <text>scyllo-inositol 1-phosphate + H2O = scyllo-inositol + phosphate</text>
        <dbReference type="Rhea" id="RHEA:82131"/>
        <dbReference type="ChEBI" id="CHEBI:10642"/>
        <dbReference type="ChEBI" id="CHEBI:15377"/>
        <dbReference type="ChEBI" id="CHEBI:43474"/>
        <dbReference type="ChEBI" id="CHEBI:232087"/>
    </reaction>
    <physiologicalReaction direction="left-to-right" evidence="1">
        <dbReference type="Rhea" id="RHEA:82132"/>
    </physiologicalReaction>
</comment>
<comment type="catalytic activity">
    <reaction evidence="3">
        <text>alpha-D-galactose 1-phosphate + H2O = D-galactose + phosphate</text>
        <dbReference type="Rhea" id="RHEA:29315"/>
        <dbReference type="ChEBI" id="CHEBI:4139"/>
        <dbReference type="ChEBI" id="CHEBI:15377"/>
        <dbReference type="ChEBI" id="CHEBI:43474"/>
        <dbReference type="ChEBI" id="CHEBI:58336"/>
        <dbReference type="EC" id="3.1.3.94"/>
    </reaction>
    <physiologicalReaction direction="left-to-right" evidence="6">
        <dbReference type="Rhea" id="RHEA:29316"/>
    </physiologicalReaction>
</comment>
<comment type="catalytic activity">
    <reaction evidence="1">
        <text>alpha-D-glucose 1-phosphate + H2O = D-glucose + phosphate</text>
        <dbReference type="Rhea" id="RHEA:19933"/>
        <dbReference type="ChEBI" id="CHEBI:4167"/>
        <dbReference type="ChEBI" id="CHEBI:15377"/>
        <dbReference type="ChEBI" id="CHEBI:43474"/>
        <dbReference type="ChEBI" id="CHEBI:58601"/>
    </reaction>
    <physiologicalReaction direction="left-to-right" evidence="1">
        <dbReference type="Rhea" id="RHEA:19934"/>
    </physiologicalReaction>
</comment>
<comment type="catalytic activity">
    <reaction evidence="1">
        <text>D-glucose 6-phosphate + H2O = D-glucose + phosphate</text>
        <dbReference type="Rhea" id="RHEA:16689"/>
        <dbReference type="ChEBI" id="CHEBI:4167"/>
        <dbReference type="ChEBI" id="CHEBI:15377"/>
        <dbReference type="ChEBI" id="CHEBI:43474"/>
        <dbReference type="ChEBI" id="CHEBI:61548"/>
    </reaction>
    <physiologicalReaction direction="left-to-right" evidence="1">
        <dbReference type="Rhea" id="RHEA:16690"/>
    </physiologicalReaction>
</comment>
<comment type="catalytic activity">
    <reaction evidence="1">
        <text>beta-D-fructose 1-phosphate + H2O = D-fructose + phosphate</text>
        <dbReference type="Rhea" id="RHEA:35603"/>
        <dbReference type="ChEBI" id="CHEBI:15377"/>
        <dbReference type="ChEBI" id="CHEBI:37721"/>
        <dbReference type="ChEBI" id="CHEBI:43474"/>
        <dbReference type="ChEBI" id="CHEBI:138881"/>
    </reaction>
    <physiologicalReaction direction="left-to-right" evidence="1">
        <dbReference type="Rhea" id="RHEA:35604"/>
    </physiologicalReaction>
</comment>
<comment type="catalytic activity">
    <reaction evidence="1">
        <text>glycerol 2-phosphate + H2O = glycerol + phosphate</text>
        <dbReference type="Rhea" id="RHEA:13105"/>
        <dbReference type="ChEBI" id="CHEBI:15377"/>
        <dbReference type="ChEBI" id="CHEBI:17754"/>
        <dbReference type="ChEBI" id="CHEBI:43474"/>
        <dbReference type="ChEBI" id="CHEBI:58083"/>
    </reaction>
    <physiologicalReaction direction="left-to-right" evidence="1">
        <dbReference type="Rhea" id="RHEA:13106"/>
    </physiologicalReaction>
</comment>
<comment type="catalytic activity">
    <reaction evidence="1">
        <text>adenosine 2'-phosphate + H2O = adenosine + phosphate</text>
        <dbReference type="Rhea" id="RHEA:37343"/>
        <dbReference type="ChEBI" id="CHEBI:15377"/>
        <dbReference type="ChEBI" id="CHEBI:16335"/>
        <dbReference type="ChEBI" id="CHEBI:43474"/>
        <dbReference type="ChEBI" id="CHEBI:77740"/>
    </reaction>
    <physiologicalReaction direction="left-to-right" evidence="1">
        <dbReference type="Rhea" id="RHEA:37344"/>
    </physiologicalReaction>
</comment>
<comment type="cofactor">
    <cofactor evidence="3">
        <name>Mg(2+)</name>
        <dbReference type="ChEBI" id="CHEBI:18420"/>
    </cofactor>
</comment>
<comment type="activity regulation">
    <text evidence="3">Activity with myo-inositol monophosphate and D-galactose 1-phosphate is inhibited by Li(+), Ca(2+) and Mn(2+), but also by Mg(2+) at concentrations above 3 mM.</text>
</comment>
<comment type="pathway">
    <text>Polyol metabolism; myo-inositol biosynthesis; myo-inositol from D-glucose 6-phosphate: step 2/2.</text>
</comment>
<comment type="subunit">
    <text evidence="3">Homodimer.</text>
</comment>
<comment type="subcellular location">
    <subcellularLocation>
        <location evidence="1">Cytoplasm</location>
    </subcellularLocation>
</comment>
<comment type="tissue specificity">
    <text evidence="2">Ubiquitous.</text>
</comment>
<comment type="similarity">
    <text evidence="5">Belongs to the inositol monophosphatase superfamily.</text>
</comment>
<gene>
    <name type="primary">Impa1</name>
    <name type="synonym">Imp</name>
</gene>
<organism>
    <name type="scientific">Rattus norvegicus</name>
    <name type="common">Rat</name>
    <dbReference type="NCBI Taxonomy" id="10116"/>
    <lineage>
        <taxon>Eukaryota</taxon>
        <taxon>Metazoa</taxon>
        <taxon>Chordata</taxon>
        <taxon>Craniata</taxon>
        <taxon>Vertebrata</taxon>
        <taxon>Euteleostomi</taxon>
        <taxon>Mammalia</taxon>
        <taxon>Eutheria</taxon>
        <taxon>Euarchontoglires</taxon>
        <taxon>Glires</taxon>
        <taxon>Rodentia</taxon>
        <taxon>Myomorpha</taxon>
        <taxon>Muroidea</taxon>
        <taxon>Muridae</taxon>
        <taxon>Murinae</taxon>
        <taxon>Rattus</taxon>
    </lineage>
</organism>